<protein>
    <recommendedName>
        <fullName evidence="1">Thymidine kinase</fullName>
        <ecNumber evidence="1">2.7.1.21</ecNumber>
    </recommendedName>
</protein>
<reference key="1">
    <citation type="journal article" date="2004" name="Nature">
        <title>Genome sequence of Silicibacter pomeroyi reveals adaptations to the marine environment.</title>
        <authorList>
            <person name="Moran M.A."/>
            <person name="Buchan A."/>
            <person name="Gonzalez J.M."/>
            <person name="Heidelberg J.F."/>
            <person name="Whitman W.B."/>
            <person name="Kiene R.P."/>
            <person name="Henriksen J.R."/>
            <person name="King G.M."/>
            <person name="Belas R."/>
            <person name="Fuqua C."/>
            <person name="Brinkac L.M."/>
            <person name="Lewis M."/>
            <person name="Johri S."/>
            <person name="Weaver B."/>
            <person name="Pai G."/>
            <person name="Eisen J.A."/>
            <person name="Rahe E."/>
            <person name="Sheldon W.M."/>
            <person name="Ye W."/>
            <person name="Miller T.R."/>
            <person name="Carlton J."/>
            <person name="Rasko D.A."/>
            <person name="Paulsen I.T."/>
            <person name="Ren Q."/>
            <person name="Daugherty S.C."/>
            <person name="DeBoy R.T."/>
            <person name="Dodson R.J."/>
            <person name="Durkin A.S."/>
            <person name="Madupu R."/>
            <person name="Nelson W.C."/>
            <person name="Sullivan S.A."/>
            <person name="Rosovitz M.J."/>
            <person name="Haft D.H."/>
            <person name="Selengut J."/>
            <person name="Ward N."/>
        </authorList>
    </citation>
    <scope>NUCLEOTIDE SEQUENCE [LARGE SCALE GENOMIC DNA]</scope>
    <source>
        <strain>ATCC 700808 / DSM 15171 / DSS-3</strain>
    </source>
</reference>
<reference key="2">
    <citation type="journal article" date="2014" name="Stand. Genomic Sci.">
        <title>An updated genome annotation for the model marine bacterium Ruegeria pomeroyi DSS-3.</title>
        <authorList>
            <person name="Rivers A.R."/>
            <person name="Smith C.B."/>
            <person name="Moran M.A."/>
        </authorList>
    </citation>
    <scope>GENOME REANNOTATION</scope>
    <source>
        <strain>ATCC 700808 / DSM 15171 / DSS-3</strain>
    </source>
</reference>
<comment type="catalytic activity">
    <reaction evidence="1">
        <text>thymidine + ATP = dTMP + ADP + H(+)</text>
        <dbReference type="Rhea" id="RHEA:19129"/>
        <dbReference type="ChEBI" id="CHEBI:15378"/>
        <dbReference type="ChEBI" id="CHEBI:17748"/>
        <dbReference type="ChEBI" id="CHEBI:30616"/>
        <dbReference type="ChEBI" id="CHEBI:63528"/>
        <dbReference type="ChEBI" id="CHEBI:456216"/>
        <dbReference type="EC" id="2.7.1.21"/>
    </reaction>
</comment>
<comment type="subunit">
    <text evidence="1">Homotetramer.</text>
</comment>
<comment type="subcellular location">
    <subcellularLocation>
        <location evidence="1">Cytoplasm</location>
    </subcellularLocation>
</comment>
<comment type="similarity">
    <text evidence="1">Belongs to the thymidine kinase family.</text>
</comment>
<proteinExistence type="inferred from homology"/>
<sequence length="198" mass="21618">MAKLYFNYSTMNAGKSTVLLQASHNYRERGMQTYLMTAAIDGRAGTGRIASRIGIGAEADIFTPRDDVFAMIRDRLGAGPVACVFVDEAQFLSPEQVWQLARVVDDLDVPVLAYGLRVDFQGKLFPGSATLLALADEMREVRTICKCGRKATMVIRQDASGRAITEGAQVQIGGNETYVSLCRKHWREATGDPGAKGH</sequence>
<evidence type="ECO:0000255" key="1">
    <source>
        <dbReference type="HAMAP-Rule" id="MF_00124"/>
    </source>
</evidence>
<keyword id="KW-0067">ATP-binding</keyword>
<keyword id="KW-0963">Cytoplasm</keyword>
<keyword id="KW-0237">DNA synthesis</keyword>
<keyword id="KW-0418">Kinase</keyword>
<keyword id="KW-0479">Metal-binding</keyword>
<keyword id="KW-0547">Nucleotide-binding</keyword>
<keyword id="KW-1185">Reference proteome</keyword>
<keyword id="KW-0808">Transferase</keyword>
<keyword id="KW-0862">Zinc</keyword>
<organism>
    <name type="scientific">Ruegeria pomeroyi (strain ATCC 700808 / DSM 15171 / DSS-3)</name>
    <name type="common">Silicibacter pomeroyi</name>
    <dbReference type="NCBI Taxonomy" id="246200"/>
    <lineage>
        <taxon>Bacteria</taxon>
        <taxon>Pseudomonadati</taxon>
        <taxon>Pseudomonadota</taxon>
        <taxon>Alphaproteobacteria</taxon>
        <taxon>Rhodobacterales</taxon>
        <taxon>Roseobacteraceae</taxon>
        <taxon>Ruegeria</taxon>
    </lineage>
</organism>
<accession>Q5LUY8</accession>
<feature type="chain" id="PRO_0000175017" description="Thymidine kinase">
    <location>
        <begin position="1"/>
        <end position="198"/>
    </location>
</feature>
<feature type="active site" description="Proton acceptor" evidence="1">
    <location>
        <position position="88"/>
    </location>
</feature>
<feature type="binding site" evidence="1">
    <location>
        <begin position="9"/>
        <end position="16"/>
    </location>
    <ligand>
        <name>ATP</name>
        <dbReference type="ChEBI" id="CHEBI:30616"/>
    </ligand>
</feature>
<feature type="binding site" evidence="1">
    <location>
        <begin position="87"/>
        <end position="90"/>
    </location>
    <ligand>
        <name>ATP</name>
        <dbReference type="ChEBI" id="CHEBI:30616"/>
    </ligand>
</feature>
<feature type="binding site" evidence="1">
    <location>
        <position position="145"/>
    </location>
    <ligand>
        <name>Zn(2+)</name>
        <dbReference type="ChEBI" id="CHEBI:29105"/>
    </ligand>
</feature>
<feature type="binding site" evidence="1">
    <location>
        <position position="147"/>
    </location>
    <ligand>
        <name>Zn(2+)</name>
        <dbReference type="ChEBI" id="CHEBI:29105"/>
    </ligand>
</feature>
<feature type="binding site" evidence="1">
    <location>
        <position position="182"/>
    </location>
    <ligand>
        <name>Zn(2+)</name>
        <dbReference type="ChEBI" id="CHEBI:29105"/>
    </ligand>
</feature>
<feature type="binding site" evidence="1">
    <location>
        <position position="185"/>
    </location>
    <ligand>
        <name>Zn(2+)</name>
        <dbReference type="ChEBI" id="CHEBI:29105"/>
    </ligand>
</feature>
<gene>
    <name evidence="1" type="primary">tdk</name>
    <name type="ordered locus">SPO0914</name>
</gene>
<name>KITH_RUEPO</name>
<dbReference type="EC" id="2.7.1.21" evidence="1"/>
<dbReference type="EMBL" id="CP000031">
    <property type="protein sequence ID" value="AAV94219.1"/>
    <property type="molecule type" value="Genomic_DNA"/>
</dbReference>
<dbReference type="RefSeq" id="WP_011046663.1">
    <property type="nucleotide sequence ID" value="NC_003911.12"/>
</dbReference>
<dbReference type="SMR" id="Q5LUY8"/>
<dbReference type="STRING" id="246200.SPO0914"/>
<dbReference type="PaxDb" id="246200-SPO0914"/>
<dbReference type="DNASU" id="3195435"/>
<dbReference type="KEGG" id="sil:SPO0914"/>
<dbReference type="eggNOG" id="COG1435">
    <property type="taxonomic scope" value="Bacteria"/>
</dbReference>
<dbReference type="HOGENOM" id="CLU_064400_2_1_5"/>
<dbReference type="OrthoDB" id="9781579at2"/>
<dbReference type="Proteomes" id="UP000001023">
    <property type="component" value="Chromosome"/>
</dbReference>
<dbReference type="GO" id="GO:0005829">
    <property type="term" value="C:cytosol"/>
    <property type="evidence" value="ECO:0007669"/>
    <property type="project" value="TreeGrafter"/>
</dbReference>
<dbReference type="GO" id="GO:0005524">
    <property type="term" value="F:ATP binding"/>
    <property type="evidence" value="ECO:0007669"/>
    <property type="project" value="UniProtKB-UniRule"/>
</dbReference>
<dbReference type="GO" id="GO:0004797">
    <property type="term" value="F:thymidine kinase activity"/>
    <property type="evidence" value="ECO:0007669"/>
    <property type="project" value="UniProtKB-UniRule"/>
</dbReference>
<dbReference type="GO" id="GO:0008270">
    <property type="term" value="F:zinc ion binding"/>
    <property type="evidence" value="ECO:0007669"/>
    <property type="project" value="UniProtKB-UniRule"/>
</dbReference>
<dbReference type="GO" id="GO:0071897">
    <property type="term" value="P:DNA biosynthetic process"/>
    <property type="evidence" value="ECO:0007669"/>
    <property type="project" value="UniProtKB-KW"/>
</dbReference>
<dbReference type="GO" id="GO:0046104">
    <property type="term" value="P:thymidine metabolic process"/>
    <property type="evidence" value="ECO:0007669"/>
    <property type="project" value="TreeGrafter"/>
</dbReference>
<dbReference type="Gene3D" id="3.30.60.20">
    <property type="match status" value="1"/>
</dbReference>
<dbReference type="Gene3D" id="3.40.50.300">
    <property type="entry name" value="P-loop containing nucleotide triphosphate hydrolases"/>
    <property type="match status" value="1"/>
</dbReference>
<dbReference type="HAMAP" id="MF_00124">
    <property type="entry name" value="Thymidine_kinase"/>
    <property type="match status" value="1"/>
</dbReference>
<dbReference type="InterPro" id="IPR027417">
    <property type="entry name" value="P-loop_NTPase"/>
</dbReference>
<dbReference type="InterPro" id="IPR001267">
    <property type="entry name" value="Thymidine_kinase"/>
</dbReference>
<dbReference type="InterPro" id="IPR020633">
    <property type="entry name" value="Thymidine_kinase_CS"/>
</dbReference>
<dbReference type="NCBIfam" id="NF003300">
    <property type="entry name" value="PRK04296.1-5"/>
    <property type="match status" value="1"/>
</dbReference>
<dbReference type="PANTHER" id="PTHR11441">
    <property type="entry name" value="THYMIDINE KINASE"/>
    <property type="match status" value="1"/>
</dbReference>
<dbReference type="PANTHER" id="PTHR11441:SF0">
    <property type="entry name" value="THYMIDINE KINASE, CYTOSOLIC"/>
    <property type="match status" value="1"/>
</dbReference>
<dbReference type="Pfam" id="PF00265">
    <property type="entry name" value="TK"/>
    <property type="match status" value="1"/>
</dbReference>
<dbReference type="PIRSF" id="PIRSF035805">
    <property type="entry name" value="TK_cell"/>
    <property type="match status" value="1"/>
</dbReference>
<dbReference type="SUPFAM" id="SSF57716">
    <property type="entry name" value="Glucocorticoid receptor-like (DNA-binding domain)"/>
    <property type="match status" value="1"/>
</dbReference>
<dbReference type="SUPFAM" id="SSF52540">
    <property type="entry name" value="P-loop containing nucleoside triphosphate hydrolases"/>
    <property type="match status" value="1"/>
</dbReference>
<dbReference type="PROSITE" id="PS00603">
    <property type="entry name" value="TK_CELLULAR_TYPE"/>
    <property type="match status" value="1"/>
</dbReference>